<protein>
    <recommendedName>
        <fullName evidence="1">Phenylalanine--tRNA ligase beta subunit</fullName>
        <ecNumber evidence="1">6.1.1.20</ecNumber>
    </recommendedName>
    <alternativeName>
        <fullName evidence="1">Phenylalanyl-tRNA synthetase beta subunit</fullName>
        <shortName evidence="1">PheRS</shortName>
    </alternativeName>
</protein>
<dbReference type="EC" id="6.1.1.20" evidence="1"/>
<dbReference type="EMBL" id="BA000035">
    <property type="protein sequence ID" value="BAC18331.1"/>
    <property type="molecule type" value="Genomic_DNA"/>
</dbReference>
<dbReference type="RefSeq" id="WP_006770428.1">
    <property type="nucleotide sequence ID" value="NC_004369.1"/>
</dbReference>
<dbReference type="SMR" id="Q8FTP0"/>
<dbReference type="STRING" id="196164.gene:10741936"/>
<dbReference type="KEGG" id="cef:CE1521"/>
<dbReference type="eggNOG" id="COG0072">
    <property type="taxonomic scope" value="Bacteria"/>
</dbReference>
<dbReference type="eggNOG" id="COG0073">
    <property type="taxonomic scope" value="Bacteria"/>
</dbReference>
<dbReference type="HOGENOM" id="CLU_016891_0_0_11"/>
<dbReference type="OrthoDB" id="9805455at2"/>
<dbReference type="Proteomes" id="UP000001409">
    <property type="component" value="Chromosome"/>
</dbReference>
<dbReference type="GO" id="GO:0009328">
    <property type="term" value="C:phenylalanine-tRNA ligase complex"/>
    <property type="evidence" value="ECO:0007669"/>
    <property type="project" value="TreeGrafter"/>
</dbReference>
<dbReference type="GO" id="GO:0005524">
    <property type="term" value="F:ATP binding"/>
    <property type="evidence" value="ECO:0007669"/>
    <property type="project" value="UniProtKB-UniRule"/>
</dbReference>
<dbReference type="GO" id="GO:0000287">
    <property type="term" value="F:magnesium ion binding"/>
    <property type="evidence" value="ECO:0007669"/>
    <property type="project" value="UniProtKB-UniRule"/>
</dbReference>
<dbReference type="GO" id="GO:0004826">
    <property type="term" value="F:phenylalanine-tRNA ligase activity"/>
    <property type="evidence" value="ECO:0007669"/>
    <property type="project" value="UniProtKB-UniRule"/>
</dbReference>
<dbReference type="GO" id="GO:0000049">
    <property type="term" value="F:tRNA binding"/>
    <property type="evidence" value="ECO:0007669"/>
    <property type="project" value="UniProtKB-KW"/>
</dbReference>
<dbReference type="GO" id="GO:0006432">
    <property type="term" value="P:phenylalanyl-tRNA aminoacylation"/>
    <property type="evidence" value="ECO:0007669"/>
    <property type="project" value="UniProtKB-UniRule"/>
</dbReference>
<dbReference type="CDD" id="cd00769">
    <property type="entry name" value="PheRS_beta_core"/>
    <property type="match status" value="1"/>
</dbReference>
<dbReference type="CDD" id="cd02796">
    <property type="entry name" value="tRNA_bind_bactPheRS"/>
    <property type="match status" value="1"/>
</dbReference>
<dbReference type="FunFam" id="3.30.70.380:FF:000001">
    <property type="entry name" value="Phenylalanine--tRNA ligase beta subunit"/>
    <property type="match status" value="1"/>
</dbReference>
<dbReference type="FunFam" id="3.30.930.10:FF:000130">
    <property type="entry name" value="Phenylalanine--tRNA ligase beta subunit"/>
    <property type="match status" value="1"/>
</dbReference>
<dbReference type="Gene3D" id="3.30.56.10">
    <property type="match status" value="2"/>
</dbReference>
<dbReference type="Gene3D" id="3.30.930.10">
    <property type="entry name" value="Bira Bifunctional Protein, Domain 2"/>
    <property type="match status" value="1"/>
</dbReference>
<dbReference type="Gene3D" id="3.30.70.380">
    <property type="entry name" value="Ferrodoxin-fold anticodon-binding domain"/>
    <property type="match status" value="1"/>
</dbReference>
<dbReference type="Gene3D" id="2.40.50.140">
    <property type="entry name" value="Nucleic acid-binding proteins"/>
    <property type="match status" value="1"/>
</dbReference>
<dbReference type="Gene3D" id="3.50.40.10">
    <property type="entry name" value="Phenylalanyl-trna Synthetase, Chain B, domain 3"/>
    <property type="match status" value="1"/>
</dbReference>
<dbReference type="HAMAP" id="MF_00283">
    <property type="entry name" value="Phe_tRNA_synth_beta1"/>
    <property type="match status" value="1"/>
</dbReference>
<dbReference type="InterPro" id="IPR045864">
    <property type="entry name" value="aa-tRNA-synth_II/BPL/LPL"/>
</dbReference>
<dbReference type="InterPro" id="IPR005146">
    <property type="entry name" value="B3/B4_tRNA-bd"/>
</dbReference>
<dbReference type="InterPro" id="IPR009061">
    <property type="entry name" value="DNA-bd_dom_put_sf"/>
</dbReference>
<dbReference type="InterPro" id="IPR005121">
    <property type="entry name" value="Fdx_antiC-bd"/>
</dbReference>
<dbReference type="InterPro" id="IPR036690">
    <property type="entry name" value="Fdx_antiC-bd_sf"/>
</dbReference>
<dbReference type="InterPro" id="IPR012340">
    <property type="entry name" value="NA-bd_OB-fold"/>
</dbReference>
<dbReference type="InterPro" id="IPR045060">
    <property type="entry name" value="Phe-tRNA-ligase_IIc_bsu"/>
</dbReference>
<dbReference type="InterPro" id="IPR004532">
    <property type="entry name" value="Phe-tRNA-ligase_IIc_bsu_bact"/>
</dbReference>
<dbReference type="InterPro" id="IPR020825">
    <property type="entry name" value="Phe-tRNA_synthase-like_B3/B4"/>
</dbReference>
<dbReference type="InterPro" id="IPR041616">
    <property type="entry name" value="PheRS_beta_core"/>
</dbReference>
<dbReference type="InterPro" id="IPR002547">
    <property type="entry name" value="tRNA-bd_dom"/>
</dbReference>
<dbReference type="InterPro" id="IPR033714">
    <property type="entry name" value="tRNA_bind_bactPheRS"/>
</dbReference>
<dbReference type="InterPro" id="IPR005147">
    <property type="entry name" value="tRNA_synthase_B5-dom"/>
</dbReference>
<dbReference type="NCBIfam" id="TIGR00472">
    <property type="entry name" value="pheT_bact"/>
    <property type="match status" value="1"/>
</dbReference>
<dbReference type="PANTHER" id="PTHR10947:SF0">
    <property type="entry name" value="PHENYLALANINE--TRNA LIGASE BETA SUBUNIT"/>
    <property type="match status" value="1"/>
</dbReference>
<dbReference type="PANTHER" id="PTHR10947">
    <property type="entry name" value="PHENYLALANYL-TRNA SYNTHETASE BETA CHAIN AND LEUCINE-RICH REPEAT-CONTAINING PROTEIN 47"/>
    <property type="match status" value="1"/>
</dbReference>
<dbReference type="Pfam" id="PF03483">
    <property type="entry name" value="B3_4"/>
    <property type="match status" value="1"/>
</dbReference>
<dbReference type="Pfam" id="PF03484">
    <property type="entry name" value="B5"/>
    <property type="match status" value="1"/>
</dbReference>
<dbReference type="Pfam" id="PF03147">
    <property type="entry name" value="FDX-ACB"/>
    <property type="match status" value="1"/>
</dbReference>
<dbReference type="Pfam" id="PF01588">
    <property type="entry name" value="tRNA_bind"/>
    <property type="match status" value="1"/>
</dbReference>
<dbReference type="Pfam" id="PF17759">
    <property type="entry name" value="tRNA_synthFbeta"/>
    <property type="match status" value="1"/>
</dbReference>
<dbReference type="SMART" id="SM00873">
    <property type="entry name" value="B3_4"/>
    <property type="match status" value="1"/>
</dbReference>
<dbReference type="SMART" id="SM00874">
    <property type="entry name" value="B5"/>
    <property type="match status" value="1"/>
</dbReference>
<dbReference type="SMART" id="SM00896">
    <property type="entry name" value="FDX-ACB"/>
    <property type="match status" value="1"/>
</dbReference>
<dbReference type="SUPFAM" id="SSF54991">
    <property type="entry name" value="Anticodon-binding domain of PheRS"/>
    <property type="match status" value="1"/>
</dbReference>
<dbReference type="SUPFAM" id="SSF55681">
    <property type="entry name" value="Class II aaRS and biotin synthetases"/>
    <property type="match status" value="1"/>
</dbReference>
<dbReference type="SUPFAM" id="SSF50249">
    <property type="entry name" value="Nucleic acid-binding proteins"/>
    <property type="match status" value="1"/>
</dbReference>
<dbReference type="SUPFAM" id="SSF56037">
    <property type="entry name" value="PheT/TilS domain"/>
    <property type="match status" value="1"/>
</dbReference>
<dbReference type="SUPFAM" id="SSF46955">
    <property type="entry name" value="Putative DNA-binding domain"/>
    <property type="match status" value="1"/>
</dbReference>
<dbReference type="PROSITE" id="PS51483">
    <property type="entry name" value="B5"/>
    <property type="match status" value="1"/>
</dbReference>
<dbReference type="PROSITE" id="PS51447">
    <property type="entry name" value="FDX_ACB"/>
    <property type="match status" value="1"/>
</dbReference>
<dbReference type="PROSITE" id="PS50886">
    <property type="entry name" value="TRBD"/>
    <property type="match status" value="1"/>
</dbReference>
<sequence length="835" mass="89278">MFIAQNWVTGLLGHSNPGWSVTSEELDAGYVRVGFETEGYAAIPATTGPLVLGVVESIEELTEFKKPIRHCFVNVGQANGTGENQSIICGARNFAEGDTVVVALPGAVLPGDFAIGARETYGRMSAGMICSAAELGLADKQNSGIITLPAESGQPGDDARAVLGLDDTVFEVNVTPDRGYALSARGLTRELASAFNLTYTDVAEDTRVAGIELTAPEPAGELIDIDVREETNTVRFGLRKVSGIDPNAESPFWLQRELMLCRQRPVNAATDVTNYVMMLLGAPMHAFDATKITGGLTVRNAQPGEKFETLDHVIRDLSGEDVVICDETGIQSMAGVMGGVTSEISNETTEVYFESAIWDPKTVARTSRRHKLSSEASRRFERGVDPAIVEVALDMACSLLVEIAGGTIDAGRTLIGEVPTMPSITMPVSRPSELAGVEYSPETVVARLEEVGCTVSVNGDVLTVVPPTWRSDLTMAADLVEEVLRLEGLEAIPTIVPTAPAGRGLSDAQKRRRAIGHALAYAGYAEIIPSPFMNPETFDVWGLDADDERRNTVTVLNPLEADSNVLSTTLLPSMLDAVRRNVTRGTGDFSLFGVQQVSFERGNGVSPMPSVKQRPSAEVVAELLDTLPEQPLHAATVGTGNIEFEGPWGSGRAYTYADAIESARIVARAAGIELELANADELPWHPGRCAALLVDGHVVGHAGELHPQVLERAGLPARTCAMEINIDALPLRENLPAPVLSAFPALHQDIALVVDETVPAEQVRAVVEEGAGELVETVELFDVYRSEQLGEGKKSLAFSLLFRAPDRTLTDEEANVARLAAAELAKERLGAEMRG</sequence>
<keyword id="KW-0030">Aminoacyl-tRNA synthetase</keyword>
<keyword id="KW-0067">ATP-binding</keyword>
<keyword id="KW-0963">Cytoplasm</keyword>
<keyword id="KW-0436">Ligase</keyword>
<keyword id="KW-0460">Magnesium</keyword>
<keyword id="KW-0479">Metal-binding</keyword>
<keyword id="KW-0547">Nucleotide-binding</keyword>
<keyword id="KW-0648">Protein biosynthesis</keyword>
<keyword id="KW-1185">Reference proteome</keyword>
<keyword id="KW-0694">RNA-binding</keyword>
<keyword id="KW-0820">tRNA-binding</keyword>
<feature type="chain" id="PRO_0000126874" description="Phenylalanine--tRNA ligase beta subunit">
    <location>
        <begin position="1"/>
        <end position="835"/>
    </location>
</feature>
<feature type="domain" description="tRNA-binding" evidence="1">
    <location>
        <begin position="44"/>
        <end position="160"/>
    </location>
</feature>
<feature type="domain" description="B5" evidence="1">
    <location>
        <begin position="419"/>
        <end position="494"/>
    </location>
</feature>
<feature type="domain" description="FDX-ACB" evidence="1">
    <location>
        <begin position="741"/>
        <end position="834"/>
    </location>
</feature>
<feature type="binding site" evidence="1">
    <location>
        <position position="472"/>
    </location>
    <ligand>
        <name>Mg(2+)</name>
        <dbReference type="ChEBI" id="CHEBI:18420"/>
        <note>shared with alpha subunit</note>
    </ligand>
</feature>
<feature type="binding site" evidence="1">
    <location>
        <position position="478"/>
    </location>
    <ligand>
        <name>Mg(2+)</name>
        <dbReference type="ChEBI" id="CHEBI:18420"/>
        <note>shared with alpha subunit</note>
    </ligand>
</feature>
<feature type="binding site" evidence="1">
    <location>
        <position position="481"/>
    </location>
    <ligand>
        <name>Mg(2+)</name>
        <dbReference type="ChEBI" id="CHEBI:18420"/>
        <note>shared with alpha subunit</note>
    </ligand>
</feature>
<feature type="binding site" evidence="1">
    <location>
        <position position="482"/>
    </location>
    <ligand>
        <name>Mg(2+)</name>
        <dbReference type="ChEBI" id="CHEBI:18420"/>
        <note>shared with alpha subunit</note>
    </ligand>
</feature>
<proteinExistence type="inferred from homology"/>
<gene>
    <name evidence="1" type="primary">pheT</name>
    <name type="ordered locus">CE1521</name>
</gene>
<evidence type="ECO:0000255" key="1">
    <source>
        <dbReference type="HAMAP-Rule" id="MF_00283"/>
    </source>
</evidence>
<reference key="1">
    <citation type="journal article" date="2003" name="Genome Res.">
        <title>Comparative complete genome sequence analysis of the amino acid replacements responsible for the thermostability of Corynebacterium efficiens.</title>
        <authorList>
            <person name="Nishio Y."/>
            <person name="Nakamura Y."/>
            <person name="Kawarabayasi Y."/>
            <person name="Usuda Y."/>
            <person name="Kimura E."/>
            <person name="Sugimoto S."/>
            <person name="Matsui K."/>
            <person name="Yamagishi A."/>
            <person name="Kikuchi H."/>
            <person name="Ikeo K."/>
            <person name="Gojobori T."/>
        </authorList>
    </citation>
    <scope>NUCLEOTIDE SEQUENCE [LARGE SCALE GENOMIC DNA]</scope>
    <source>
        <strain>DSM 44549 / YS-314 / AJ 12310 / JCM 11189 / NBRC 100395</strain>
    </source>
</reference>
<accession>Q8FTP0</accession>
<organism>
    <name type="scientific">Corynebacterium efficiens (strain DSM 44549 / YS-314 / AJ 12310 / JCM 11189 / NBRC 100395)</name>
    <dbReference type="NCBI Taxonomy" id="196164"/>
    <lineage>
        <taxon>Bacteria</taxon>
        <taxon>Bacillati</taxon>
        <taxon>Actinomycetota</taxon>
        <taxon>Actinomycetes</taxon>
        <taxon>Mycobacteriales</taxon>
        <taxon>Corynebacteriaceae</taxon>
        <taxon>Corynebacterium</taxon>
    </lineage>
</organism>
<name>SYFB_COREF</name>
<comment type="catalytic activity">
    <reaction evidence="1">
        <text>tRNA(Phe) + L-phenylalanine + ATP = L-phenylalanyl-tRNA(Phe) + AMP + diphosphate + H(+)</text>
        <dbReference type="Rhea" id="RHEA:19413"/>
        <dbReference type="Rhea" id="RHEA-COMP:9668"/>
        <dbReference type="Rhea" id="RHEA-COMP:9699"/>
        <dbReference type="ChEBI" id="CHEBI:15378"/>
        <dbReference type="ChEBI" id="CHEBI:30616"/>
        <dbReference type="ChEBI" id="CHEBI:33019"/>
        <dbReference type="ChEBI" id="CHEBI:58095"/>
        <dbReference type="ChEBI" id="CHEBI:78442"/>
        <dbReference type="ChEBI" id="CHEBI:78531"/>
        <dbReference type="ChEBI" id="CHEBI:456215"/>
        <dbReference type="EC" id="6.1.1.20"/>
    </reaction>
</comment>
<comment type="cofactor">
    <cofactor evidence="1">
        <name>Mg(2+)</name>
        <dbReference type="ChEBI" id="CHEBI:18420"/>
    </cofactor>
    <text evidence="1">Binds 2 magnesium ions per tetramer.</text>
</comment>
<comment type="subunit">
    <text evidence="1">Tetramer of two alpha and two beta subunits.</text>
</comment>
<comment type="subcellular location">
    <subcellularLocation>
        <location evidence="1">Cytoplasm</location>
    </subcellularLocation>
</comment>
<comment type="similarity">
    <text evidence="1">Belongs to the phenylalanyl-tRNA synthetase beta subunit family. Type 1 subfamily.</text>
</comment>